<accession>A7Z3X7</accession>
<sequence>MATIRIHDEKNTLIEHQEEVARFLDEQEVIYEQWNIEKLPSELSEKYDLTEDEKERILAVFDTEIQDISARRGYQSQDVISLSDTTPNLDELLKNFQREHHHTDDEVRFIVSGHGIFVIQGKDGTFFDVRLNPGDLISVPENIRHYFTLQEDRRVVAIRIFVTTEGWVPIYENESVQN</sequence>
<reference key="1">
    <citation type="journal article" date="2007" name="Nat. Biotechnol.">
        <title>Comparative analysis of the complete genome sequence of the plant growth-promoting bacterium Bacillus amyloliquefaciens FZB42.</title>
        <authorList>
            <person name="Chen X.H."/>
            <person name="Koumoutsi A."/>
            <person name="Scholz R."/>
            <person name="Eisenreich A."/>
            <person name="Schneider K."/>
            <person name="Heinemeyer I."/>
            <person name="Morgenstern B."/>
            <person name="Voss B."/>
            <person name="Hess W.R."/>
            <person name="Reva O."/>
            <person name="Junge H."/>
            <person name="Voigt B."/>
            <person name="Jungblut P.R."/>
            <person name="Vater J."/>
            <person name="Suessmuth R."/>
            <person name="Liesegang H."/>
            <person name="Strittmatter A."/>
            <person name="Gottschalk G."/>
            <person name="Borriss R."/>
        </authorList>
    </citation>
    <scope>NUCLEOTIDE SEQUENCE [LARGE SCALE GENOMIC DNA]</scope>
    <source>
        <strain>DSM 23117 / BGSC 10A6 / LMG 26770 / FZB42</strain>
    </source>
</reference>
<organism>
    <name type="scientific">Bacillus velezensis (strain DSM 23117 / BGSC 10A6 / LMG 26770 / FZB42)</name>
    <name type="common">Bacillus amyloliquefaciens subsp. plantarum</name>
    <dbReference type="NCBI Taxonomy" id="326423"/>
    <lineage>
        <taxon>Bacteria</taxon>
        <taxon>Bacillati</taxon>
        <taxon>Bacillota</taxon>
        <taxon>Bacilli</taxon>
        <taxon>Bacillales</taxon>
        <taxon>Bacillaceae</taxon>
        <taxon>Bacillus</taxon>
        <taxon>Bacillus amyloliquefaciens group</taxon>
    </lineage>
</organism>
<comment type="function">
    <text evidence="1">Catalyzes 2 different reactions between oxygen and the acireductone 1,2-dihydroxy-3-keto-5-methylthiopentene (DHK-MTPene) depending upon the metal bound in the active site. Fe-containing acireductone dioxygenase (Fe-ARD) produces formate and 2-keto-4-methylthiobutyrate (KMTB), the alpha-ketoacid precursor of methionine in the methionine recycle pathway. Ni-containing acireductone dioxygenase (Ni-ARD) produces methylthiopropionate, carbon monoxide and formate, and does not lie on the methionine recycle pathway.</text>
</comment>
<comment type="catalytic activity">
    <reaction evidence="1">
        <text>1,2-dihydroxy-5-(methylsulfanyl)pent-1-en-3-one + O2 = 3-(methylsulfanyl)propanoate + CO + formate + 2 H(+)</text>
        <dbReference type="Rhea" id="RHEA:14161"/>
        <dbReference type="ChEBI" id="CHEBI:15378"/>
        <dbReference type="ChEBI" id="CHEBI:15379"/>
        <dbReference type="ChEBI" id="CHEBI:15740"/>
        <dbReference type="ChEBI" id="CHEBI:17245"/>
        <dbReference type="ChEBI" id="CHEBI:49016"/>
        <dbReference type="ChEBI" id="CHEBI:49252"/>
        <dbReference type="EC" id="1.13.11.53"/>
    </reaction>
</comment>
<comment type="catalytic activity">
    <reaction evidence="1">
        <text>1,2-dihydroxy-5-(methylsulfanyl)pent-1-en-3-one + O2 = 4-methylsulfanyl-2-oxobutanoate + formate + 2 H(+)</text>
        <dbReference type="Rhea" id="RHEA:24504"/>
        <dbReference type="ChEBI" id="CHEBI:15378"/>
        <dbReference type="ChEBI" id="CHEBI:15379"/>
        <dbReference type="ChEBI" id="CHEBI:15740"/>
        <dbReference type="ChEBI" id="CHEBI:16723"/>
        <dbReference type="ChEBI" id="CHEBI:49252"/>
        <dbReference type="EC" id="1.13.11.54"/>
    </reaction>
</comment>
<comment type="cofactor">
    <cofactor evidence="1">
        <name>Fe(2+)</name>
        <dbReference type="ChEBI" id="CHEBI:29033"/>
    </cofactor>
    <text evidence="1">Binds 1 Fe(2+) cation per monomer.</text>
</comment>
<comment type="cofactor">
    <cofactor evidence="1">
        <name>Ni(2+)</name>
        <dbReference type="ChEBI" id="CHEBI:49786"/>
    </cofactor>
    <text evidence="1">Binds 1 nickel ion per monomer.</text>
</comment>
<comment type="pathway">
    <text evidence="1">Amino-acid biosynthesis; L-methionine biosynthesis via salvage pathway; L-methionine from S-methyl-5-thio-alpha-D-ribose 1-phosphate: step 5/6.</text>
</comment>
<comment type="subunit">
    <text evidence="1">Monomer.</text>
</comment>
<comment type="similarity">
    <text evidence="1">Belongs to the acireductone dioxygenase (ARD) family.</text>
</comment>
<feature type="chain" id="PRO_0000359173" description="Acireductone dioxygenase">
    <location>
        <begin position="1"/>
        <end position="178"/>
    </location>
</feature>
<feature type="binding site" evidence="1">
    <location>
        <position position="100"/>
    </location>
    <ligand>
        <name>Fe(2+)</name>
        <dbReference type="ChEBI" id="CHEBI:29033"/>
    </ligand>
</feature>
<feature type="binding site" evidence="1">
    <location>
        <position position="100"/>
    </location>
    <ligand>
        <name>Ni(2+)</name>
        <dbReference type="ChEBI" id="CHEBI:49786"/>
    </ligand>
</feature>
<feature type="binding site" evidence="1">
    <location>
        <position position="102"/>
    </location>
    <ligand>
        <name>Fe(2+)</name>
        <dbReference type="ChEBI" id="CHEBI:29033"/>
    </ligand>
</feature>
<feature type="binding site" evidence="1">
    <location>
        <position position="102"/>
    </location>
    <ligand>
        <name>Ni(2+)</name>
        <dbReference type="ChEBI" id="CHEBI:49786"/>
    </ligand>
</feature>
<feature type="binding site" evidence="1">
    <location>
        <position position="106"/>
    </location>
    <ligand>
        <name>Fe(2+)</name>
        <dbReference type="ChEBI" id="CHEBI:29033"/>
    </ligand>
</feature>
<feature type="binding site" evidence="1">
    <location>
        <position position="106"/>
    </location>
    <ligand>
        <name>Ni(2+)</name>
        <dbReference type="ChEBI" id="CHEBI:49786"/>
    </ligand>
</feature>
<feature type="binding site" evidence="1">
    <location>
        <position position="145"/>
    </location>
    <ligand>
        <name>Fe(2+)</name>
        <dbReference type="ChEBI" id="CHEBI:29033"/>
    </ligand>
</feature>
<feature type="binding site" evidence="1">
    <location>
        <position position="145"/>
    </location>
    <ligand>
        <name>Ni(2+)</name>
        <dbReference type="ChEBI" id="CHEBI:49786"/>
    </ligand>
</feature>
<feature type="site" description="May play a role in metal incorporation in vivo" evidence="1">
    <location>
        <position position="99"/>
    </location>
</feature>
<feature type="site" description="May play a role in transmitting local conformational changes" evidence="1">
    <location>
        <position position="105"/>
    </location>
</feature>
<feature type="site" description="Important to generate the dianion" evidence="1">
    <location>
        <position position="108"/>
    </location>
</feature>
<evidence type="ECO:0000255" key="1">
    <source>
        <dbReference type="HAMAP-Rule" id="MF_01682"/>
    </source>
</evidence>
<name>MTND_BACVZ</name>
<proteinExistence type="inferred from homology"/>
<gene>
    <name evidence="1" type="primary">mtnD</name>
    <name type="ordered locus">RBAM_013400</name>
</gene>
<protein>
    <recommendedName>
        <fullName evidence="1">Acireductone dioxygenase</fullName>
    </recommendedName>
    <alternativeName>
        <fullName evidence="1">1,2-dihydroxy-3-keto-5-methylthiopentene dioxygenase</fullName>
        <shortName evidence="1">DHK-MTPene dioxygenase</shortName>
    </alternativeName>
    <alternativeName>
        <fullName evidence="1">Acireductone dioxygenase (Fe(2+)-requiring)</fullName>
        <shortName evidence="1">ARD'</shortName>
        <shortName evidence="1">Fe-ARD</shortName>
        <ecNumber evidence="1">1.13.11.54</ecNumber>
    </alternativeName>
    <alternativeName>
        <fullName evidence="1">Acireductone dioxygenase (Ni(2+)-requiring)</fullName>
        <shortName evidence="1">ARD</shortName>
        <shortName evidence="1">Ni-ARD</shortName>
        <ecNumber evidence="1">1.13.11.53</ecNumber>
    </alternativeName>
</protein>
<dbReference type="EC" id="1.13.11.54" evidence="1"/>
<dbReference type="EC" id="1.13.11.53" evidence="1"/>
<dbReference type="EMBL" id="CP000560">
    <property type="protein sequence ID" value="ABS73703.1"/>
    <property type="molecule type" value="Genomic_DNA"/>
</dbReference>
<dbReference type="RefSeq" id="WP_012117415.1">
    <property type="nucleotide sequence ID" value="NC_009725.2"/>
</dbReference>
<dbReference type="SMR" id="A7Z3X7"/>
<dbReference type="GeneID" id="93080475"/>
<dbReference type="KEGG" id="bay:RBAM_013400"/>
<dbReference type="HOGENOM" id="CLU_125400_0_0_9"/>
<dbReference type="UniPathway" id="UPA00904">
    <property type="reaction ID" value="UER00878"/>
</dbReference>
<dbReference type="Proteomes" id="UP000001120">
    <property type="component" value="Chromosome"/>
</dbReference>
<dbReference type="GO" id="GO:0010308">
    <property type="term" value="F:acireductone dioxygenase (Ni2+-requiring) activity"/>
    <property type="evidence" value="ECO:0007669"/>
    <property type="project" value="UniProtKB-UniRule"/>
</dbReference>
<dbReference type="GO" id="GO:0010309">
    <property type="term" value="F:acireductone dioxygenase [iron(II)-requiring] activity"/>
    <property type="evidence" value="ECO:0007669"/>
    <property type="project" value="UniProtKB-UniRule"/>
</dbReference>
<dbReference type="GO" id="GO:0005506">
    <property type="term" value="F:iron ion binding"/>
    <property type="evidence" value="ECO:0007669"/>
    <property type="project" value="UniProtKB-UniRule"/>
</dbReference>
<dbReference type="GO" id="GO:0016151">
    <property type="term" value="F:nickel cation binding"/>
    <property type="evidence" value="ECO:0007669"/>
    <property type="project" value="UniProtKB-UniRule"/>
</dbReference>
<dbReference type="GO" id="GO:0019509">
    <property type="term" value="P:L-methionine salvage from methylthioadenosine"/>
    <property type="evidence" value="ECO:0007669"/>
    <property type="project" value="UniProtKB-UniRule"/>
</dbReference>
<dbReference type="GO" id="GO:0019284">
    <property type="term" value="P:L-methionine salvage from S-adenosylmethionine"/>
    <property type="evidence" value="ECO:0007669"/>
    <property type="project" value="InterPro"/>
</dbReference>
<dbReference type="CDD" id="cd02232">
    <property type="entry name" value="cupin_ARD"/>
    <property type="match status" value="1"/>
</dbReference>
<dbReference type="FunFam" id="2.60.120.10:FF:000056">
    <property type="entry name" value="Acireductone dioxygenase"/>
    <property type="match status" value="1"/>
</dbReference>
<dbReference type="Gene3D" id="2.60.120.10">
    <property type="entry name" value="Jelly Rolls"/>
    <property type="match status" value="1"/>
</dbReference>
<dbReference type="HAMAP" id="MF_01682">
    <property type="entry name" value="Salvage_MtnD"/>
    <property type="match status" value="1"/>
</dbReference>
<dbReference type="InterPro" id="IPR004313">
    <property type="entry name" value="ARD"/>
</dbReference>
<dbReference type="InterPro" id="IPR023956">
    <property type="entry name" value="ARD_bac"/>
</dbReference>
<dbReference type="InterPro" id="IPR014710">
    <property type="entry name" value="RmlC-like_jellyroll"/>
</dbReference>
<dbReference type="InterPro" id="IPR011051">
    <property type="entry name" value="RmlC_Cupin_sf"/>
</dbReference>
<dbReference type="PANTHER" id="PTHR23418">
    <property type="entry name" value="ACIREDUCTONE DIOXYGENASE"/>
    <property type="match status" value="1"/>
</dbReference>
<dbReference type="PANTHER" id="PTHR23418:SF0">
    <property type="entry name" value="ACIREDUCTONE DIOXYGENASE"/>
    <property type="match status" value="1"/>
</dbReference>
<dbReference type="Pfam" id="PF03079">
    <property type="entry name" value="ARD"/>
    <property type="match status" value="1"/>
</dbReference>
<dbReference type="SUPFAM" id="SSF51182">
    <property type="entry name" value="RmlC-like cupins"/>
    <property type="match status" value="1"/>
</dbReference>
<keyword id="KW-0028">Amino-acid biosynthesis</keyword>
<keyword id="KW-0223">Dioxygenase</keyword>
<keyword id="KW-0408">Iron</keyword>
<keyword id="KW-0479">Metal-binding</keyword>
<keyword id="KW-0486">Methionine biosynthesis</keyword>
<keyword id="KW-0533">Nickel</keyword>
<keyword id="KW-0560">Oxidoreductase</keyword>